<organism>
    <name type="scientific">Neisseria gonorrhoeae (strain NCCP11945)</name>
    <dbReference type="NCBI Taxonomy" id="521006"/>
    <lineage>
        <taxon>Bacteria</taxon>
        <taxon>Pseudomonadati</taxon>
        <taxon>Pseudomonadota</taxon>
        <taxon>Betaproteobacteria</taxon>
        <taxon>Neisseriales</taxon>
        <taxon>Neisseriaceae</taxon>
        <taxon>Neisseria</taxon>
    </lineage>
</organism>
<feature type="chain" id="PRO_0000388909" description="UPF0756 membrane protein NGK_2061">
    <location>
        <begin position="1"/>
        <end position="148"/>
    </location>
</feature>
<feature type="transmembrane region" description="Helical" evidence="1">
    <location>
        <begin position="10"/>
        <end position="32"/>
    </location>
</feature>
<feature type="transmembrane region" description="Helical" evidence="1">
    <location>
        <begin position="50"/>
        <end position="70"/>
    </location>
</feature>
<feature type="transmembrane region" description="Helical" evidence="1">
    <location>
        <begin position="85"/>
        <end position="105"/>
    </location>
</feature>
<feature type="transmembrane region" description="Helical" evidence="1">
    <location>
        <begin position="116"/>
        <end position="136"/>
    </location>
</feature>
<sequence>MNFSFVPLFLVTLILLGVVSNNNSITVSATILLLMQQTALVQFVPLVEKHGLNLGIILLTIGVLSPLVSGKAQVPPVAEFLNFKMISAVFIGIFVAWLAGCGVPLMGRQPVLVTGLLIGTVIGVAFMGGIPVGPLIAADILSFVAGKV</sequence>
<keyword id="KW-1003">Cell membrane</keyword>
<keyword id="KW-0472">Membrane</keyword>
<keyword id="KW-0812">Transmembrane</keyword>
<keyword id="KW-1133">Transmembrane helix</keyword>
<dbReference type="EMBL" id="CP001050">
    <property type="protein sequence ID" value="ACF30670.1"/>
    <property type="molecule type" value="Genomic_DNA"/>
</dbReference>
<dbReference type="RefSeq" id="WP_003689818.1">
    <property type="nucleotide sequence ID" value="NC_011035.1"/>
</dbReference>
<dbReference type="KEGG" id="ngk:NGK_2061"/>
<dbReference type="HOGENOM" id="CLU_125889_0_0_4"/>
<dbReference type="Proteomes" id="UP000002564">
    <property type="component" value="Chromosome"/>
</dbReference>
<dbReference type="GO" id="GO:0005886">
    <property type="term" value="C:plasma membrane"/>
    <property type="evidence" value="ECO:0007669"/>
    <property type="project" value="UniProtKB-SubCell"/>
</dbReference>
<dbReference type="HAMAP" id="MF_01874">
    <property type="entry name" value="UPF0756"/>
    <property type="match status" value="1"/>
</dbReference>
<dbReference type="InterPro" id="IPR007382">
    <property type="entry name" value="UPF0756_TM"/>
</dbReference>
<dbReference type="PANTHER" id="PTHR38452">
    <property type="entry name" value="UPF0756 MEMBRANE PROTEIN YEAL"/>
    <property type="match status" value="1"/>
</dbReference>
<dbReference type="PANTHER" id="PTHR38452:SF1">
    <property type="entry name" value="UPF0756 MEMBRANE PROTEIN YEAL"/>
    <property type="match status" value="1"/>
</dbReference>
<dbReference type="Pfam" id="PF04284">
    <property type="entry name" value="DUF441"/>
    <property type="match status" value="1"/>
</dbReference>
<protein>
    <recommendedName>
        <fullName evidence="1">UPF0756 membrane protein NGK_2061</fullName>
    </recommendedName>
</protein>
<accession>B4RNN7</accession>
<gene>
    <name type="ordered locus">NGK_2061</name>
</gene>
<evidence type="ECO:0000255" key="1">
    <source>
        <dbReference type="HAMAP-Rule" id="MF_01874"/>
    </source>
</evidence>
<reference key="1">
    <citation type="journal article" date="2008" name="J. Bacteriol.">
        <title>Complete genome sequence of Neisseria gonorrhoeae NCCP11945.</title>
        <authorList>
            <person name="Chung G.T."/>
            <person name="Yoo J.S."/>
            <person name="Oh H.B."/>
            <person name="Lee Y.S."/>
            <person name="Cha S.H."/>
            <person name="Kim S.J."/>
            <person name="Yoo C.K."/>
        </authorList>
    </citation>
    <scope>NUCLEOTIDE SEQUENCE [LARGE SCALE GENOMIC DNA]</scope>
    <source>
        <strain>NCCP11945</strain>
    </source>
</reference>
<comment type="subcellular location">
    <subcellularLocation>
        <location evidence="1">Cell membrane</location>
        <topology evidence="1">Multi-pass membrane protein</topology>
    </subcellularLocation>
</comment>
<comment type="similarity">
    <text evidence="1">Belongs to the UPF0756 family.</text>
</comment>
<proteinExistence type="inferred from homology"/>
<name>Y2061_NEIG2</name>